<organism>
    <name type="scientific">Oryza sativa subsp. indica</name>
    <name type="common">Rice</name>
    <dbReference type="NCBI Taxonomy" id="39946"/>
    <lineage>
        <taxon>Eukaryota</taxon>
        <taxon>Viridiplantae</taxon>
        <taxon>Streptophyta</taxon>
        <taxon>Embryophyta</taxon>
        <taxon>Tracheophyta</taxon>
        <taxon>Spermatophyta</taxon>
        <taxon>Magnoliopsida</taxon>
        <taxon>Liliopsida</taxon>
        <taxon>Poales</taxon>
        <taxon>Poaceae</taxon>
        <taxon>BOP clade</taxon>
        <taxon>Oryzoideae</taxon>
        <taxon>Oryzeae</taxon>
        <taxon>Oryzinae</taxon>
        <taxon>Oryza</taxon>
        <taxon>Oryza sativa</taxon>
    </lineage>
</organism>
<proteinExistence type="inferred from homology"/>
<reference key="1">
    <citation type="journal article" date="2005" name="PLoS Biol.">
        <title>The genomes of Oryza sativa: a history of duplications.</title>
        <authorList>
            <person name="Yu J."/>
            <person name="Wang J."/>
            <person name="Lin W."/>
            <person name="Li S."/>
            <person name="Li H."/>
            <person name="Zhou J."/>
            <person name="Ni P."/>
            <person name="Dong W."/>
            <person name="Hu S."/>
            <person name="Zeng C."/>
            <person name="Zhang J."/>
            <person name="Zhang Y."/>
            <person name="Li R."/>
            <person name="Xu Z."/>
            <person name="Li S."/>
            <person name="Li X."/>
            <person name="Zheng H."/>
            <person name="Cong L."/>
            <person name="Lin L."/>
            <person name="Yin J."/>
            <person name="Geng J."/>
            <person name="Li G."/>
            <person name="Shi J."/>
            <person name="Liu J."/>
            <person name="Lv H."/>
            <person name="Li J."/>
            <person name="Wang J."/>
            <person name="Deng Y."/>
            <person name="Ran L."/>
            <person name="Shi X."/>
            <person name="Wang X."/>
            <person name="Wu Q."/>
            <person name="Li C."/>
            <person name="Ren X."/>
            <person name="Wang J."/>
            <person name="Wang X."/>
            <person name="Li D."/>
            <person name="Liu D."/>
            <person name="Zhang X."/>
            <person name="Ji Z."/>
            <person name="Zhao W."/>
            <person name="Sun Y."/>
            <person name="Zhang Z."/>
            <person name="Bao J."/>
            <person name="Han Y."/>
            <person name="Dong L."/>
            <person name="Ji J."/>
            <person name="Chen P."/>
            <person name="Wu S."/>
            <person name="Liu J."/>
            <person name="Xiao Y."/>
            <person name="Bu D."/>
            <person name="Tan J."/>
            <person name="Yang L."/>
            <person name="Ye C."/>
            <person name="Zhang J."/>
            <person name="Xu J."/>
            <person name="Zhou Y."/>
            <person name="Yu Y."/>
            <person name="Zhang B."/>
            <person name="Zhuang S."/>
            <person name="Wei H."/>
            <person name="Liu B."/>
            <person name="Lei M."/>
            <person name="Yu H."/>
            <person name="Li Y."/>
            <person name="Xu H."/>
            <person name="Wei S."/>
            <person name="He X."/>
            <person name="Fang L."/>
            <person name="Zhang Z."/>
            <person name="Zhang Y."/>
            <person name="Huang X."/>
            <person name="Su Z."/>
            <person name="Tong W."/>
            <person name="Li J."/>
            <person name="Tong Z."/>
            <person name="Li S."/>
            <person name="Ye J."/>
            <person name="Wang L."/>
            <person name="Fang L."/>
            <person name="Lei T."/>
            <person name="Chen C.-S."/>
            <person name="Chen H.-C."/>
            <person name="Xu Z."/>
            <person name="Li H."/>
            <person name="Huang H."/>
            <person name="Zhang F."/>
            <person name="Xu H."/>
            <person name="Li N."/>
            <person name="Zhao C."/>
            <person name="Li S."/>
            <person name="Dong L."/>
            <person name="Huang Y."/>
            <person name="Li L."/>
            <person name="Xi Y."/>
            <person name="Qi Q."/>
            <person name="Li W."/>
            <person name="Zhang B."/>
            <person name="Hu W."/>
            <person name="Zhang Y."/>
            <person name="Tian X."/>
            <person name="Jiao Y."/>
            <person name="Liang X."/>
            <person name="Jin J."/>
            <person name="Gao L."/>
            <person name="Zheng W."/>
            <person name="Hao B."/>
            <person name="Liu S.-M."/>
            <person name="Wang W."/>
            <person name="Yuan L."/>
            <person name="Cao M."/>
            <person name="McDermott J."/>
            <person name="Samudrala R."/>
            <person name="Wang J."/>
            <person name="Wong G.K.-S."/>
            <person name="Yang H."/>
        </authorList>
    </citation>
    <scope>NUCLEOTIDE SEQUENCE [LARGE SCALE GENOMIC DNA]</scope>
    <source>
        <strain>cv. 93-11</strain>
    </source>
</reference>
<evidence type="ECO:0000250" key="1">
    <source>
        <dbReference type="UniProtKB" id="Q5VRD7"/>
    </source>
</evidence>
<evidence type="ECO:0000255" key="2"/>
<evidence type="ECO:0000305" key="3"/>
<evidence type="ECO:0000312" key="4">
    <source>
        <dbReference type="EMBL" id="EAY72767.1"/>
    </source>
</evidence>
<dbReference type="EMBL" id="CM000126">
    <property type="protein sequence ID" value="EAY72767.1"/>
    <property type="molecule type" value="Genomic_DNA"/>
</dbReference>
<dbReference type="STRING" id="39946.A2WLC1"/>
<dbReference type="EnsemblPlants" id="BGIOSGA002264-TA">
    <property type="protein sequence ID" value="BGIOSGA002264-PA"/>
    <property type="gene ID" value="BGIOSGA002264"/>
</dbReference>
<dbReference type="EnsemblPlants" id="OsGoSa_01g0005560.01">
    <property type="protein sequence ID" value="OsGoSa_01g0005560.01"/>
    <property type="gene ID" value="OsGoSa_01g0005560"/>
</dbReference>
<dbReference type="EnsemblPlants" id="OsIR64_01g0005500.01">
    <property type="protein sequence ID" value="OsIR64_01g0005500.01"/>
    <property type="gene ID" value="OsIR64_01g0005500"/>
</dbReference>
<dbReference type="EnsemblPlants" id="OsKYG_01g0005500.01">
    <property type="protein sequence ID" value="OsKYG_01g0005500.01"/>
    <property type="gene ID" value="OsKYG_01g0005500"/>
</dbReference>
<dbReference type="EnsemblPlants" id="OsLaMu_01g0005480.01">
    <property type="protein sequence ID" value="OsLaMu_01g0005480.01"/>
    <property type="gene ID" value="OsLaMu_01g0005480"/>
</dbReference>
<dbReference type="EnsemblPlants" id="OsLima_01g0005310.01">
    <property type="protein sequence ID" value="OsLima_01g0005310.01"/>
    <property type="gene ID" value="OsLima_01g0005310"/>
</dbReference>
<dbReference type="EnsemblPlants" id="OsLiXu_01g0005500.01">
    <property type="protein sequence ID" value="OsLiXu_01g0005500.01"/>
    <property type="gene ID" value="OsLiXu_01g0005500"/>
</dbReference>
<dbReference type="EnsemblPlants" id="OsPr106_01g0005550.01">
    <property type="protein sequence ID" value="OsPr106_01g0005550.01"/>
    <property type="gene ID" value="OsPr106_01g0005550"/>
</dbReference>
<dbReference type="Gramene" id="BGIOSGA002264-TA">
    <property type="protein sequence ID" value="BGIOSGA002264-PA"/>
    <property type="gene ID" value="BGIOSGA002264"/>
</dbReference>
<dbReference type="Gramene" id="OsGoSa_01g0005560.01">
    <property type="protein sequence ID" value="OsGoSa_01g0005560.01"/>
    <property type="gene ID" value="OsGoSa_01g0005560"/>
</dbReference>
<dbReference type="Gramene" id="OsIR64_01g0005500.01">
    <property type="protein sequence ID" value="OsIR64_01g0005500.01"/>
    <property type="gene ID" value="OsIR64_01g0005500"/>
</dbReference>
<dbReference type="Gramene" id="OsKYG_01g0005500.01">
    <property type="protein sequence ID" value="OsKYG_01g0005500.01"/>
    <property type="gene ID" value="OsKYG_01g0005500"/>
</dbReference>
<dbReference type="Gramene" id="OsLaMu_01g0005480.01">
    <property type="protein sequence ID" value="OsLaMu_01g0005480.01"/>
    <property type="gene ID" value="OsLaMu_01g0005480"/>
</dbReference>
<dbReference type="Gramene" id="OsLima_01g0005310.01">
    <property type="protein sequence ID" value="OsLima_01g0005310.01"/>
    <property type="gene ID" value="OsLima_01g0005310"/>
</dbReference>
<dbReference type="Gramene" id="OsLiXu_01g0005500.01">
    <property type="protein sequence ID" value="OsLiXu_01g0005500.01"/>
    <property type="gene ID" value="OsLiXu_01g0005500"/>
</dbReference>
<dbReference type="Gramene" id="OsPr106_01g0005550.01">
    <property type="protein sequence ID" value="OsPr106_01g0005550.01"/>
    <property type="gene ID" value="OsPr106_01g0005550"/>
</dbReference>
<dbReference type="HOGENOM" id="CLU_156676_2_0_1"/>
<dbReference type="OMA" id="EMSYMEH"/>
<dbReference type="Proteomes" id="UP000007015">
    <property type="component" value="Chromosome 1"/>
</dbReference>
<dbReference type="GO" id="GO:0009505">
    <property type="term" value="C:plant-type cell wall"/>
    <property type="evidence" value="ECO:0000250"/>
    <property type="project" value="UniProtKB"/>
</dbReference>
<dbReference type="GO" id="GO:0005886">
    <property type="term" value="C:plasma membrane"/>
    <property type="evidence" value="ECO:0000250"/>
    <property type="project" value="UniProtKB"/>
</dbReference>
<dbReference type="GO" id="GO:0046872">
    <property type="term" value="F:metal ion binding"/>
    <property type="evidence" value="ECO:0000250"/>
    <property type="project" value="UniProtKB"/>
</dbReference>
<dbReference type="GO" id="GO:0140487">
    <property type="term" value="F:metal ion sequestering activity"/>
    <property type="evidence" value="ECO:0000250"/>
    <property type="project" value="UniProtKB"/>
</dbReference>
<dbReference type="GO" id="GO:1990748">
    <property type="term" value="P:cellular detoxification"/>
    <property type="evidence" value="ECO:0000250"/>
    <property type="project" value="UniProtKB"/>
</dbReference>
<dbReference type="GO" id="GO:0140982">
    <property type="term" value="P:detoxification of aluminum ion"/>
    <property type="evidence" value="ECO:0000250"/>
    <property type="project" value="UniProtKB"/>
</dbReference>
<dbReference type="GO" id="GO:0071585">
    <property type="term" value="P:detoxification of cadmium ion"/>
    <property type="evidence" value="ECO:0000250"/>
    <property type="project" value="UniProtKB"/>
</dbReference>
<dbReference type="GO" id="GO:0010273">
    <property type="term" value="P:detoxification of copper ion"/>
    <property type="evidence" value="ECO:0000250"/>
    <property type="project" value="UniProtKB"/>
</dbReference>
<dbReference type="GO" id="GO:0010044">
    <property type="term" value="P:response to aluminum ion"/>
    <property type="evidence" value="ECO:0000250"/>
    <property type="project" value="UniProtKB"/>
</dbReference>
<dbReference type="GO" id="GO:0046686">
    <property type="term" value="P:response to cadmium ion"/>
    <property type="evidence" value="ECO:0000270"/>
    <property type="project" value="UniProtKB"/>
</dbReference>
<dbReference type="InterPro" id="IPR051671">
    <property type="entry name" value="CYSTM1_HM_Tolerance"/>
</dbReference>
<dbReference type="InterPro" id="IPR028144">
    <property type="entry name" value="CYSTM_dom"/>
</dbReference>
<dbReference type="PANTHER" id="PTHR35470">
    <property type="entry name" value="CADMIUM TOLERANT 3"/>
    <property type="match status" value="1"/>
</dbReference>
<dbReference type="PANTHER" id="PTHR35470:SF6">
    <property type="entry name" value="PROTEIN CYSTEINE-RICH TRANSMEMBRANE MODULE 2"/>
    <property type="match status" value="1"/>
</dbReference>
<dbReference type="Pfam" id="PF12734">
    <property type="entry name" value="CYSTM"/>
    <property type="match status" value="1"/>
</dbReference>
<feature type="chain" id="PRO_0000454817" description="Protein CADMIUM TOLERANCE 3">
    <location>
        <begin position="1"/>
        <end position="53"/>
    </location>
</feature>
<feature type="transmembrane region" description="Helical" evidence="2">
    <location>
        <begin position="24"/>
        <end position="40"/>
    </location>
</feature>
<accession>A2WLC1</accession>
<gene>
    <name evidence="3" type="primary">CDT3</name>
    <name evidence="4" type="ORF">OsI_00632</name>
</gene>
<comment type="function">
    <text evidence="1">Confers resistance to heavy metal ions (e.g. aluminium) by chelating them at the plasma membrane of root cells, thus stopping their entry and reducing their accumulation (By similarity). Binds to and confers tolerance to aluminium (Al) (By similarity).</text>
</comment>
<comment type="subcellular location">
    <subcellularLocation>
        <location evidence="1">Cell membrane</location>
        <topology evidence="1">Single-pass membrane protein</topology>
    </subcellularLocation>
</comment>
<comment type="similarity">
    <text evidence="3">Belongs to the CYSTM1 family.</text>
</comment>
<keyword id="KW-1003">Cell membrane</keyword>
<keyword id="KW-0472">Membrane</keyword>
<keyword id="KW-0479">Metal-binding</keyword>
<keyword id="KW-1185">Reference proteome</keyword>
<keyword id="KW-0346">Stress response</keyword>
<keyword id="KW-0812">Transmembrane</keyword>
<keyword id="KW-1133">Transmembrane helix</keyword>
<sequence>MYNPPAAQEMSYSDHVKKRHEDKGCLYACLFTLCCCFCCYETCECCLECLCCC</sequence>
<name>CDT3_ORYSI</name>
<protein>
    <recommendedName>
        <fullName evidence="3">Protein CADMIUM TOLERANCE 3</fullName>
        <shortName evidence="3">Cd tolerant 3</shortName>
        <shortName evidence="3">OsCDT3</shortName>
    </recommendedName>
</protein>